<dbReference type="EC" id="3.1.3.3" evidence="3"/>
<dbReference type="EMBL" id="AB018408">
    <property type="protein sequence ID" value="BAA33806.1"/>
    <property type="molecule type" value="mRNA"/>
</dbReference>
<dbReference type="EMBL" id="AB018409">
    <property type="protein sequence ID" value="BAA33807.1"/>
    <property type="molecule type" value="Genomic_DNA"/>
</dbReference>
<dbReference type="EMBL" id="AC026238">
    <property type="protein sequence ID" value="AAF98410.1"/>
    <property type="molecule type" value="Genomic_DNA"/>
</dbReference>
<dbReference type="EMBL" id="CP002684">
    <property type="protein sequence ID" value="AEE29738.1"/>
    <property type="molecule type" value="Genomic_DNA"/>
</dbReference>
<dbReference type="EMBL" id="AY065351">
    <property type="protein sequence ID" value="AAL38792.1"/>
    <property type="molecule type" value="mRNA"/>
</dbReference>
<dbReference type="EMBL" id="AY096687">
    <property type="protein sequence ID" value="AAM20321.1"/>
    <property type="molecule type" value="mRNA"/>
</dbReference>
<dbReference type="EMBL" id="AY087385">
    <property type="protein sequence ID" value="AAM64935.1"/>
    <property type="molecule type" value="mRNA"/>
</dbReference>
<dbReference type="PIR" id="B86320">
    <property type="entry name" value="B86320"/>
</dbReference>
<dbReference type="PIR" id="T51362">
    <property type="entry name" value="T51362"/>
</dbReference>
<dbReference type="RefSeq" id="NP_973858.1">
    <property type="nucleotide sequence ID" value="NM_202129.3"/>
</dbReference>
<dbReference type="SMR" id="O82796"/>
<dbReference type="BioGRID" id="23684">
    <property type="interactions" value="1"/>
</dbReference>
<dbReference type="FunCoup" id="O82796">
    <property type="interactions" value="3026"/>
</dbReference>
<dbReference type="IntAct" id="O82796">
    <property type="interactions" value="1"/>
</dbReference>
<dbReference type="STRING" id="3702.O82796"/>
<dbReference type="PaxDb" id="3702-AT1G18640.2"/>
<dbReference type="ProteomicsDB" id="232675"/>
<dbReference type="EnsemblPlants" id="AT1G18640.2">
    <property type="protein sequence ID" value="AT1G18640.2"/>
    <property type="gene ID" value="AT1G18640"/>
</dbReference>
<dbReference type="GeneID" id="838445"/>
<dbReference type="Gramene" id="AT1G18640.2">
    <property type="protein sequence ID" value="AT1G18640.2"/>
    <property type="gene ID" value="AT1G18640"/>
</dbReference>
<dbReference type="KEGG" id="ath:AT1G18640"/>
<dbReference type="Araport" id="AT1G18640"/>
<dbReference type="TAIR" id="AT1G18640">
    <property type="gene designation" value="PSP"/>
</dbReference>
<dbReference type="eggNOG" id="KOG1615">
    <property type="taxonomic scope" value="Eukaryota"/>
</dbReference>
<dbReference type="HOGENOM" id="CLU_036368_2_1_1"/>
<dbReference type="InParanoid" id="O82796"/>
<dbReference type="OMA" id="ANYFIGF"/>
<dbReference type="PhylomeDB" id="O82796"/>
<dbReference type="BioCyc" id="ARA:AT1G18640-MONOMER"/>
<dbReference type="BioCyc" id="MetaCyc:AT1G18640-MONOMER"/>
<dbReference type="BRENDA" id="3.1.3.3">
    <property type="organism ID" value="399"/>
</dbReference>
<dbReference type="UniPathway" id="UPA00135">
    <property type="reaction ID" value="UER00198"/>
</dbReference>
<dbReference type="PRO" id="PR:O82796"/>
<dbReference type="Proteomes" id="UP000006548">
    <property type="component" value="Chromosome 1"/>
</dbReference>
<dbReference type="ExpressionAtlas" id="O82796">
    <property type="expression patterns" value="baseline and differential"/>
</dbReference>
<dbReference type="GO" id="GO:0009507">
    <property type="term" value="C:chloroplast"/>
    <property type="evidence" value="ECO:0000314"/>
    <property type="project" value="TAIR"/>
</dbReference>
<dbReference type="GO" id="GO:0009536">
    <property type="term" value="C:plastid"/>
    <property type="evidence" value="ECO:0000314"/>
    <property type="project" value="TAIR"/>
</dbReference>
<dbReference type="GO" id="GO:0036424">
    <property type="term" value="F:L-phosphoserine phosphatase activity"/>
    <property type="evidence" value="ECO:0000314"/>
    <property type="project" value="TAIR"/>
</dbReference>
<dbReference type="GO" id="GO:0000287">
    <property type="term" value="F:magnesium ion binding"/>
    <property type="evidence" value="ECO:0000250"/>
    <property type="project" value="UniProtKB"/>
</dbReference>
<dbReference type="GO" id="GO:0009793">
    <property type="term" value="P:embryo development ending in seed dormancy"/>
    <property type="evidence" value="ECO:0000315"/>
    <property type="project" value="TAIR"/>
</dbReference>
<dbReference type="GO" id="GO:0006564">
    <property type="term" value="P:L-serine biosynthetic process"/>
    <property type="evidence" value="ECO:0000304"/>
    <property type="project" value="TAIR"/>
</dbReference>
<dbReference type="GO" id="GO:0006563">
    <property type="term" value="P:L-serine metabolic process"/>
    <property type="evidence" value="ECO:0000250"/>
    <property type="project" value="UniProtKB"/>
</dbReference>
<dbReference type="GO" id="GO:0009555">
    <property type="term" value="P:pollen development"/>
    <property type="evidence" value="ECO:0000315"/>
    <property type="project" value="TAIR"/>
</dbReference>
<dbReference type="GO" id="GO:0048364">
    <property type="term" value="P:root development"/>
    <property type="evidence" value="ECO:0000315"/>
    <property type="project" value="TAIR"/>
</dbReference>
<dbReference type="GO" id="GO:0000096">
    <property type="term" value="P:sulfur amino acid metabolic process"/>
    <property type="evidence" value="ECO:0000315"/>
    <property type="project" value="TAIR"/>
</dbReference>
<dbReference type="CDD" id="cd04309">
    <property type="entry name" value="HAD_PSP_eu"/>
    <property type="match status" value="1"/>
</dbReference>
<dbReference type="FunFam" id="1.10.150.210:FF:000003">
    <property type="entry name" value="Phosphoserine phosphatase SerB"/>
    <property type="match status" value="1"/>
</dbReference>
<dbReference type="FunFam" id="3.40.50.1000:FF:000077">
    <property type="entry name" value="Phosphoserine phosphatase, chloroplastic"/>
    <property type="match status" value="1"/>
</dbReference>
<dbReference type="FunFam" id="3.40.50.1000:FF:000114">
    <property type="entry name" value="Phosphoserine phosphatase, chloroplastic"/>
    <property type="match status" value="1"/>
</dbReference>
<dbReference type="Gene3D" id="3.40.50.1000">
    <property type="entry name" value="HAD superfamily/HAD-like"/>
    <property type="match status" value="1"/>
</dbReference>
<dbReference type="Gene3D" id="1.10.150.210">
    <property type="entry name" value="Phosphoserine phosphatase, domain 2"/>
    <property type="match status" value="1"/>
</dbReference>
<dbReference type="InterPro" id="IPR050582">
    <property type="entry name" value="HAD-like_SerB"/>
</dbReference>
<dbReference type="InterPro" id="IPR036412">
    <property type="entry name" value="HAD-like_sf"/>
</dbReference>
<dbReference type="InterPro" id="IPR023214">
    <property type="entry name" value="HAD_sf"/>
</dbReference>
<dbReference type="InterPro" id="IPR004469">
    <property type="entry name" value="PSP"/>
</dbReference>
<dbReference type="NCBIfam" id="TIGR01488">
    <property type="entry name" value="HAD-SF-IB"/>
    <property type="match status" value="1"/>
</dbReference>
<dbReference type="NCBIfam" id="TIGR00338">
    <property type="entry name" value="serB"/>
    <property type="match status" value="1"/>
</dbReference>
<dbReference type="PANTHER" id="PTHR43344">
    <property type="entry name" value="PHOSPHOSERINE PHOSPHATASE"/>
    <property type="match status" value="1"/>
</dbReference>
<dbReference type="PANTHER" id="PTHR43344:SF2">
    <property type="entry name" value="PHOSPHOSERINE PHOSPHATASE"/>
    <property type="match status" value="1"/>
</dbReference>
<dbReference type="Pfam" id="PF00702">
    <property type="entry name" value="Hydrolase"/>
    <property type="match status" value="1"/>
</dbReference>
<dbReference type="SUPFAM" id="SSF56784">
    <property type="entry name" value="HAD-like"/>
    <property type="match status" value="1"/>
</dbReference>
<organism>
    <name type="scientific">Arabidopsis thaliana</name>
    <name type="common">Mouse-ear cress</name>
    <dbReference type="NCBI Taxonomy" id="3702"/>
    <lineage>
        <taxon>Eukaryota</taxon>
        <taxon>Viridiplantae</taxon>
        <taxon>Streptophyta</taxon>
        <taxon>Embryophyta</taxon>
        <taxon>Tracheophyta</taxon>
        <taxon>Spermatophyta</taxon>
        <taxon>Magnoliopsida</taxon>
        <taxon>eudicotyledons</taxon>
        <taxon>Gunneridae</taxon>
        <taxon>Pentapetalae</taxon>
        <taxon>rosids</taxon>
        <taxon>malvids</taxon>
        <taxon>Brassicales</taxon>
        <taxon>Brassicaceae</taxon>
        <taxon>Camelineae</taxon>
        <taxon>Arabidopsis</taxon>
    </lineage>
</organism>
<name>SERC_ARATH</name>
<sequence>MEALTTSRVVPVQVPCRKLSSLFANFSCLELRRYPCRGLVSIMNHPKLLRPVTASVQPHELSTLGHEGNIVPSKEILDLWRSVEAVCFDVDSTVCVDEGIDELAEFCGAGKAVAEWTARAMGGSVPFEEALAARLSLFKPSLSKVEEYLDKRPPRLSPGIEELVKKLRANNIDVYLISGGFRQMINPVASILGIPRENIFANNLLFGNSGEFLGFDENEPTSRSGGKAKAVQQIRKGRLYKTMAMIGDGATDLEARKPGGADLFICYAGVQLREAVAANADWLIFKFESLINSLD</sequence>
<gene>
    <name type="primary">PSP</name>
    <name type="synonym">PSP1</name>
    <name type="ordered locus">At1g18640</name>
    <name type="ORF">F26I16.2</name>
</gene>
<feature type="transit peptide" description="Chloroplast" evidence="2">
    <location>
        <begin position="1"/>
        <end position="54"/>
    </location>
</feature>
<feature type="chain" id="PRO_0000032375" description="Phosphoserine phosphatase, chloroplastic">
    <location>
        <begin position="55"/>
        <end position="295"/>
    </location>
</feature>
<feature type="active site" description="Nucleophile" evidence="1">
    <location>
        <position position="89"/>
    </location>
</feature>
<feature type="active site" description="Proton donor" evidence="1">
    <location>
        <position position="91"/>
    </location>
</feature>
<feature type="binding site" evidence="1">
    <location>
        <position position="89"/>
    </location>
    <ligand>
        <name>Mg(2+)</name>
        <dbReference type="ChEBI" id="CHEBI:18420"/>
    </ligand>
</feature>
<feature type="binding site" evidence="1">
    <location>
        <position position="91"/>
    </location>
    <ligand>
        <name>Mg(2+)</name>
        <dbReference type="ChEBI" id="CHEBI:18420"/>
    </ligand>
</feature>
<feature type="binding site" evidence="1">
    <location>
        <position position="98"/>
    </location>
    <ligand>
        <name>substrate</name>
    </ligand>
</feature>
<feature type="binding site" evidence="1">
    <location>
        <position position="134"/>
    </location>
    <ligand>
        <name>substrate</name>
    </ligand>
</feature>
<feature type="binding site" evidence="1">
    <location>
        <begin position="178"/>
        <end position="179"/>
    </location>
    <ligand>
        <name>substrate</name>
    </ligand>
</feature>
<feature type="binding site" evidence="1">
    <location>
        <position position="227"/>
    </location>
    <ligand>
        <name>substrate</name>
    </ligand>
</feature>
<feature type="binding site" evidence="1">
    <location>
        <position position="248"/>
    </location>
    <ligand>
        <name>Mg(2+)</name>
        <dbReference type="ChEBI" id="CHEBI:18420"/>
    </ligand>
</feature>
<feature type="sequence conflict" description="In Ref. 1; BAA33806/BAA33807." evidence="6" ref="1">
    <original>C</original>
    <variation>S</variation>
    <location>
        <position position="266"/>
    </location>
</feature>
<keyword id="KW-0028">Amino-acid biosynthesis</keyword>
<keyword id="KW-0150">Chloroplast</keyword>
<keyword id="KW-0378">Hydrolase</keyword>
<keyword id="KW-0460">Magnesium</keyword>
<keyword id="KW-0479">Metal-binding</keyword>
<keyword id="KW-0934">Plastid</keyword>
<keyword id="KW-1185">Reference proteome</keyword>
<keyword id="KW-0718">Serine biosynthesis</keyword>
<keyword id="KW-0809">Transit peptide</keyword>
<proteinExistence type="evidence at protein level"/>
<reference key="1">
    <citation type="journal article" date="1999" name="J. Biol. Chem.">
        <title>Plastidic pathway of serine biosynthesis. Molecular cloning and expression of 3-phosphoserine phosphatase from Arabidopsis thaliana.</title>
        <authorList>
            <person name="Ho C.-L."/>
            <person name="Noji M."/>
            <person name="Saito K."/>
        </authorList>
    </citation>
    <scope>NUCLEOTIDE SEQUENCE [GENOMIC DNA / MRNA]</scope>
    <scope>FUNCTION</scope>
    <scope>CATALYTIC ACTIVITY</scope>
    <scope>BIOPHYSICOCHEMICAL PROPERTIES</scope>
    <scope>ACTIVITY REGULATION</scope>
    <scope>SUBCELLULAR LOCATION</scope>
</reference>
<reference key="2">
    <citation type="journal article" date="2000" name="Nature">
        <title>Sequence and analysis of chromosome 1 of the plant Arabidopsis thaliana.</title>
        <authorList>
            <person name="Theologis A."/>
            <person name="Ecker J.R."/>
            <person name="Palm C.J."/>
            <person name="Federspiel N.A."/>
            <person name="Kaul S."/>
            <person name="White O."/>
            <person name="Alonso J."/>
            <person name="Altafi H."/>
            <person name="Araujo R."/>
            <person name="Bowman C.L."/>
            <person name="Brooks S.Y."/>
            <person name="Buehler E."/>
            <person name="Chan A."/>
            <person name="Chao Q."/>
            <person name="Chen H."/>
            <person name="Cheuk R.F."/>
            <person name="Chin C.W."/>
            <person name="Chung M.K."/>
            <person name="Conn L."/>
            <person name="Conway A.B."/>
            <person name="Conway A.R."/>
            <person name="Creasy T.H."/>
            <person name="Dewar K."/>
            <person name="Dunn P."/>
            <person name="Etgu P."/>
            <person name="Feldblyum T.V."/>
            <person name="Feng J.-D."/>
            <person name="Fong B."/>
            <person name="Fujii C.Y."/>
            <person name="Gill J.E."/>
            <person name="Goldsmith A.D."/>
            <person name="Haas B."/>
            <person name="Hansen N.F."/>
            <person name="Hughes B."/>
            <person name="Huizar L."/>
            <person name="Hunter J.L."/>
            <person name="Jenkins J."/>
            <person name="Johnson-Hopson C."/>
            <person name="Khan S."/>
            <person name="Khaykin E."/>
            <person name="Kim C.J."/>
            <person name="Koo H.L."/>
            <person name="Kremenetskaia I."/>
            <person name="Kurtz D.B."/>
            <person name="Kwan A."/>
            <person name="Lam B."/>
            <person name="Langin-Hooper S."/>
            <person name="Lee A."/>
            <person name="Lee J.M."/>
            <person name="Lenz C.A."/>
            <person name="Li J.H."/>
            <person name="Li Y.-P."/>
            <person name="Lin X."/>
            <person name="Liu S.X."/>
            <person name="Liu Z.A."/>
            <person name="Luros J.S."/>
            <person name="Maiti R."/>
            <person name="Marziali A."/>
            <person name="Militscher J."/>
            <person name="Miranda M."/>
            <person name="Nguyen M."/>
            <person name="Nierman W.C."/>
            <person name="Osborne B.I."/>
            <person name="Pai G."/>
            <person name="Peterson J."/>
            <person name="Pham P.K."/>
            <person name="Rizzo M."/>
            <person name="Rooney T."/>
            <person name="Rowley D."/>
            <person name="Sakano H."/>
            <person name="Salzberg S.L."/>
            <person name="Schwartz J.R."/>
            <person name="Shinn P."/>
            <person name="Southwick A.M."/>
            <person name="Sun H."/>
            <person name="Tallon L.J."/>
            <person name="Tambunga G."/>
            <person name="Toriumi M.J."/>
            <person name="Town C.D."/>
            <person name="Utterback T."/>
            <person name="Van Aken S."/>
            <person name="Vaysberg M."/>
            <person name="Vysotskaia V.S."/>
            <person name="Walker M."/>
            <person name="Wu D."/>
            <person name="Yu G."/>
            <person name="Fraser C.M."/>
            <person name="Venter J.C."/>
            <person name="Davis R.W."/>
        </authorList>
    </citation>
    <scope>NUCLEOTIDE SEQUENCE [LARGE SCALE GENOMIC DNA]</scope>
    <source>
        <strain>cv. Columbia</strain>
    </source>
</reference>
<reference key="3">
    <citation type="journal article" date="2017" name="Plant J.">
        <title>Araport11: a complete reannotation of the Arabidopsis thaliana reference genome.</title>
        <authorList>
            <person name="Cheng C.Y."/>
            <person name="Krishnakumar V."/>
            <person name="Chan A.P."/>
            <person name="Thibaud-Nissen F."/>
            <person name="Schobel S."/>
            <person name="Town C.D."/>
        </authorList>
    </citation>
    <scope>GENOME REANNOTATION</scope>
    <source>
        <strain>cv. Columbia</strain>
    </source>
</reference>
<reference key="4">
    <citation type="journal article" date="2003" name="Science">
        <title>Empirical analysis of transcriptional activity in the Arabidopsis genome.</title>
        <authorList>
            <person name="Yamada K."/>
            <person name="Lim J."/>
            <person name="Dale J.M."/>
            <person name="Chen H."/>
            <person name="Shinn P."/>
            <person name="Palm C.J."/>
            <person name="Southwick A.M."/>
            <person name="Wu H.C."/>
            <person name="Kim C.J."/>
            <person name="Nguyen M."/>
            <person name="Pham P.K."/>
            <person name="Cheuk R.F."/>
            <person name="Karlin-Newmann G."/>
            <person name="Liu S.X."/>
            <person name="Lam B."/>
            <person name="Sakano H."/>
            <person name="Wu T."/>
            <person name="Yu G."/>
            <person name="Miranda M."/>
            <person name="Quach H.L."/>
            <person name="Tripp M."/>
            <person name="Chang C.H."/>
            <person name="Lee J.M."/>
            <person name="Toriumi M.J."/>
            <person name="Chan M.M."/>
            <person name="Tang C.C."/>
            <person name="Onodera C.S."/>
            <person name="Deng J.M."/>
            <person name="Akiyama K."/>
            <person name="Ansari Y."/>
            <person name="Arakawa T."/>
            <person name="Banh J."/>
            <person name="Banno F."/>
            <person name="Bowser L."/>
            <person name="Brooks S.Y."/>
            <person name="Carninci P."/>
            <person name="Chao Q."/>
            <person name="Choy N."/>
            <person name="Enju A."/>
            <person name="Goldsmith A.D."/>
            <person name="Gurjal M."/>
            <person name="Hansen N.F."/>
            <person name="Hayashizaki Y."/>
            <person name="Johnson-Hopson C."/>
            <person name="Hsuan V.W."/>
            <person name="Iida K."/>
            <person name="Karnes M."/>
            <person name="Khan S."/>
            <person name="Koesema E."/>
            <person name="Ishida J."/>
            <person name="Jiang P.X."/>
            <person name="Jones T."/>
            <person name="Kawai J."/>
            <person name="Kamiya A."/>
            <person name="Meyers C."/>
            <person name="Nakajima M."/>
            <person name="Narusaka M."/>
            <person name="Seki M."/>
            <person name="Sakurai T."/>
            <person name="Satou M."/>
            <person name="Tamse R."/>
            <person name="Vaysberg M."/>
            <person name="Wallender E.K."/>
            <person name="Wong C."/>
            <person name="Yamamura Y."/>
            <person name="Yuan S."/>
            <person name="Shinozaki K."/>
            <person name="Davis R.W."/>
            <person name="Theologis A."/>
            <person name="Ecker J.R."/>
        </authorList>
    </citation>
    <scope>NUCLEOTIDE SEQUENCE [LARGE SCALE MRNA]</scope>
    <source>
        <strain>cv. Columbia</strain>
    </source>
</reference>
<reference key="5">
    <citation type="submission" date="2002-03" db="EMBL/GenBank/DDBJ databases">
        <title>Full-length cDNA from Arabidopsis thaliana.</title>
        <authorList>
            <person name="Brover V.V."/>
            <person name="Troukhan M.E."/>
            <person name="Alexandrov N.A."/>
            <person name="Lu Y.-P."/>
            <person name="Flavell R.B."/>
            <person name="Feldmann K.A."/>
        </authorList>
    </citation>
    <scope>NUCLEOTIDE SEQUENCE [LARGE SCALE MRNA]</scope>
</reference>
<reference key="6">
    <citation type="journal article" date="2013" name="Plant Cell">
        <title>The phosphorylated pathway of serine biosynthesis is essential both for male gametophyte and embryo development and for root growth in Arabidopsis.</title>
        <authorList>
            <person name="Cascales-Minana B."/>
            <person name="Munoz-Bertomeu J."/>
            <person name="Flores-Tornero M."/>
            <person name="Anoman A.D."/>
            <person name="Pertusa J."/>
            <person name="Alaiz M."/>
            <person name="Osorio S."/>
            <person name="Fernie A.R."/>
            <person name="Segura J."/>
            <person name="Ros R."/>
        </authorList>
    </citation>
    <scope>FUNCTION</scope>
    <scope>TISSUE SPECIFICITY</scope>
    <scope>INDUCTION</scope>
    <scope>SUBCELLULAR LOCATION</scope>
    <scope>DISRUPTION PHENOTYPE</scope>
    <source>
        <strain>cv. Columbia</strain>
    </source>
</reference>
<reference key="7">
    <citation type="journal article" date="2013" name="Plant Cell">
        <title>Arabidopsis phosphoglycerate dehydrogenase1 of the phosphoserine pathway is essential for development and required for ammonium assimilation and tryptophan biosynthesis.</title>
        <authorList>
            <person name="Benstein R.M."/>
            <person name="Ludewig K."/>
            <person name="Wulfert S."/>
            <person name="Wittek S."/>
            <person name="Gigolashvili T."/>
            <person name="Frerigmann H."/>
            <person name="Gierth M."/>
            <person name="Fluegge U.I."/>
            <person name="Krueger S."/>
        </authorList>
    </citation>
    <scope>DISRUPTION PHENOTYPE</scope>
    <source>
        <strain>cv. Columbia</strain>
    </source>
</reference>
<protein>
    <recommendedName>
        <fullName>Phosphoserine phosphatase, chloroplastic</fullName>
        <shortName>PSP</shortName>
        <shortName>PSPase</shortName>
        <ecNumber evidence="3">3.1.3.3</ecNumber>
    </recommendedName>
    <alternativeName>
        <fullName>O-phosphoserine phosphohydrolase</fullName>
    </alternativeName>
</protein>
<comment type="function">
    <text evidence="3 4">Catalyzes the last step in the plastidial phosphorylated pathway of serine biosynthesis (PPSB). The reaction mechanism proceeds via the formation of a phosphoryl-enzyme intermediates. Required for embryo, pollen and root development. May be required preferentially for serine biosynthesis in non-photosynthetic tissues.</text>
</comment>
<comment type="catalytic activity">
    <reaction evidence="3">
        <text>O-phospho-L-serine + H2O = L-serine + phosphate</text>
        <dbReference type="Rhea" id="RHEA:21208"/>
        <dbReference type="ChEBI" id="CHEBI:15377"/>
        <dbReference type="ChEBI" id="CHEBI:33384"/>
        <dbReference type="ChEBI" id="CHEBI:43474"/>
        <dbReference type="ChEBI" id="CHEBI:57524"/>
        <dbReference type="EC" id="3.1.3.3"/>
    </reaction>
    <physiologicalReaction direction="left-to-right" evidence="7">
        <dbReference type="Rhea" id="RHEA:21209"/>
    </physiologicalReaction>
</comment>
<comment type="catalytic activity">
    <reaction>
        <text>O-phospho-D-serine + H2O = D-serine + phosphate</text>
        <dbReference type="Rhea" id="RHEA:24873"/>
        <dbReference type="ChEBI" id="CHEBI:15377"/>
        <dbReference type="ChEBI" id="CHEBI:35247"/>
        <dbReference type="ChEBI" id="CHEBI:43474"/>
        <dbReference type="ChEBI" id="CHEBI:58680"/>
        <dbReference type="EC" id="3.1.3.3"/>
    </reaction>
</comment>
<comment type="cofactor">
    <cofactor evidence="1">
        <name>Mg(2+)</name>
        <dbReference type="ChEBI" id="CHEBI:18420"/>
    </cofactor>
    <text evidence="1">Binds 1 Mg(2+) ion per subunit.</text>
</comment>
<comment type="activity regulation">
    <text evidence="3">Approximately 60% inhibition of PSP activity is observed in presence of 10 mM serine.</text>
</comment>
<comment type="biophysicochemical properties">
    <kinetics>
        <KM evidence="3">3.5 mM for 3-phosphoserine (at 30 degrees Celsius and pH 7.5)</KM>
    </kinetics>
</comment>
<comment type="pathway">
    <text>Amino-acid biosynthesis; L-serine biosynthesis; L-serine from 3-phospho-D-glycerate: step 3/3.</text>
</comment>
<comment type="subcellular location">
    <subcellularLocation>
        <location evidence="3 4">Plastid</location>
        <location evidence="3 4">Chloroplast</location>
    </subcellularLocation>
</comment>
<comment type="tissue specificity">
    <text evidence="4">Ubiquitous. Mainly expressed in shoot and root meristems, vasculature, pollen, anthers, carpels and seeds.</text>
</comment>
<comment type="induction">
    <text evidence="4">Up-regulated in aerial parts by 8 hours exposure to darkness, whereas longer exposure down-regulate expression in both roots and aerial parts.</text>
</comment>
<comment type="disruption phenotype">
    <text evidence="4 5">Embryo lethal when homozygous.</text>
</comment>
<comment type="similarity">
    <text evidence="6">Belongs to the HAD-like hydrolase superfamily. SerB family.</text>
</comment>
<accession>O82796</accession>
<accession>Q9FZ85</accession>
<evidence type="ECO:0000250" key="1"/>
<evidence type="ECO:0000255" key="2"/>
<evidence type="ECO:0000269" key="3">
    <source>
    </source>
</evidence>
<evidence type="ECO:0000269" key="4">
    <source>
    </source>
</evidence>
<evidence type="ECO:0000269" key="5">
    <source>
    </source>
</evidence>
<evidence type="ECO:0000305" key="6"/>
<evidence type="ECO:0000305" key="7">
    <source>
    </source>
</evidence>